<reference key="1">
    <citation type="journal article" date="1995" name="Plant Mol. Biol.">
        <title>Molecular cloning, characterization and expression analysis of two catalase isozyme genes in barley.</title>
        <authorList>
            <person name="Skadsen R.W."/>
            <person name="Schulze-Lefert P."/>
            <person name="Herbst J.M."/>
        </authorList>
    </citation>
    <scope>NUCLEOTIDE SEQUENCE [MRNA]</scope>
    <source>
        <strain>cv. Morex</strain>
    </source>
</reference>
<dbReference type="EC" id="1.11.1.6"/>
<dbReference type="EMBL" id="U20777">
    <property type="protein sequence ID" value="AAA96947.1"/>
    <property type="molecule type" value="mRNA"/>
</dbReference>
<dbReference type="EMBL" id="U16132">
    <property type="protein sequence ID" value="AAA62306.1"/>
    <property type="molecule type" value="mRNA"/>
</dbReference>
<dbReference type="PIR" id="S62696">
    <property type="entry name" value="S62696"/>
</dbReference>
<dbReference type="SMR" id="P55307"/>
<dbReference type="ExpressionAtlas" id="P55307">
    <property type="expression patterns" value="baseline"/>
</dbReference>
<dbReference type="GO" id="GO:0009514">
    <property type="term" value="C:glyoxysome"/>
    <property type="evidence" value="ECO:0007669"/>
    <property type="project" value="UniProtKB-SubCell"/>
</dbReference>
<dbReference type="GO" id="GO:0005886">
    <property type="term" value="C:plasma membrane"/>
    <property type="evidence" value="ECO:0007669"/>
    <property type="project" value="TreeGrafter"/>
</dbReference>
<dbReference type="GO" id="GO:0004096">
    <property type="term" value="F:catalase activity"/>
    <property type="evidence" value="ECO:0007669"/>
    <property type="project" value="UniProtKB-EC"/>
</dbReference>
<dbReference type="GO" id="GO:0020037">
    <property type="term" value="F:heme binding"/>
    <property type="evidence" value="ECO:0007669"/>
    <property type="project" value="InterPro"/>
</dbReference>
<dbReference type="GO" id="GO:0046872">
    <property type="term" value="F:metal ion binding"/>
    <property type="evidence" value="ECO:0007669"/>
    <property type="project" value="UniProtKB-KW"/>
</dbReference>
<dbReference type="GO" id="GO:0042744">
    <property type="term" value="P:hydrogen peroxide catabolic process"/>
    <property type="evidence" value="ECO:0007669"/>
    <property type="project" value="UniProtKB-KW"/>
</dbReference>
<dbReference type="GO" id="GO:0009725">
    <property type="term" value="P:response to hormone"/>
    <property type="evidence" value="ECO:0007669"/>
    <property type="project" value="UniProtKB-ARBA"/>
</dbReference>
<dbReference type="GO" id="GO:0042542">
    <property type="term" value="P:response to hydrogen peroxide"/>
    <property type="evidence" value="ECO:0007669"/>
    <property type="project" value="TreeGrafter"/>
</dbReference>
<dbReference type="CDD" id="cd08154">
    <property type="entry name" value="catalase_clade_1"/>
    <property type="match status" value="1"/>
</dbReference>
<dbReference type="FunFam" id="2.40.180.10:FF:000002">
    <property type="entry name" value="Catalase"/>
    <property type="match status" value="1"/>
</dbReference>
<dbReference type="Gene3D" id="2.40.180.10">
    <property type="entry name" value="Catalase core domain"/>
    <property type="match status" value="1"/>
</dbReference>
<dbReference type="InterPro" id="IPR018028">
    <property type="entry name" value="Catalase"/>
</dbReference>
<dbReference type="InterPro" id="IPR024708">
    <property type="entry name" value="Catalase_AS"/>
</dbReference>
<dbReference type="InterPro" id="IPR024711">
    <property type="entry name" value="Catalase_clade1/3"/>
</dbReference>
<dbReference type="InterPro" id="IPR011614">
    <property type="entry name" value="Catalase_core"/>
</dbReference>
<dbReference type="InterPro" id="IPR002226">
    <property type="entry name" value="Catalase_haem_BS"/>
</dbReference>
<dbReference type="InterPro" id="IPR010582">
    <property type="entry name" value="Catalase_immune_responsive"/>
</dbReference>
<dbReference type="InterPro" id="IPR020835">
    <property type="entry name" value="Catalase_sf"/>
</dbReference>
<dbReference type="PANTHER" id="PTHR11465">
    <property type="entry name" value="CATALASE"/>
    <property type="match status" value="1"/>
</dbReference>
<dbReference type="PANTHER" id="PTHR11465:SF60">
    <property type="entry name" value="CATALASE ISOZYME B"/>
    <property type="match status" value="1"/>
</dbReference>
<dbReference type="Pfam" id="PF00199">
    <property type="entry name" value="Catalase"/>
    <property type="match status" value="1"/>
</dbReference>
<dbReference type="Pfam" id="PF06628">
    <property type="entry name" value="Catalase-rel"/>
    <property type="match status" value="1"/>
</dbReference>
<dbReference type="PIRSF" id="PIRSF038928">
    <property type="entry name" value="Catalase_clade1-3"/>
    <property type="match status" value="1"/>
</dbReference>
<dbReference type="PRINTS" id="PR00067">
    <property type="entry name" value="CATALASE"/>
</dbReference>
<dbReference type="SMART" id="SM01060">
    <property type="entry name" value="Catalase"/>
    <property type="match status" value="1"/>
</dbReference>
<dbReference type="SUPFAM" id="SSF56634">
    <property type="entry name" value="Heme-dependent catalase-like"/>
    <property type="match status" value="1"/>
</dbReference>
<dbReference type="PROSITE" id="PS00437">
    <property type="entry name" value="CATALASE_1"/>
    <property type="match status" value="1"/>
</dbReference>
<dbReference type="PROSITE" id="PS00438">
    <property type="entry name" value="CATALASE_2"/>
    <property type="match status" value="1"/>
</dbReference>
<dbReference type="PROSITE" id="PS51402">
    <property type="entry name" value="CATALASE_3"/>
    <property type="match status" value="1"/>
</dbReference>
<feature type="chain" id="PRO_0000084941" description="Catalase isozyme 1">
    <location>
        <begin position="1"/>
        <end position="492"/>
    </location>
</feature>
<feature type="active site" evidence="2">
    <location>
        <position position="65"/>
    </location>
</feature>
<feature type="active site" evidence="2">
    <location>
        <position position="138"/>
    </location>
</feature>
<feature type="binding site" description="axial binding residue" evidence="1">
    <location>
        <position position="348"/>
    </location>
    <ligand>
        <name>heme</name>
        <dbReference type="ChEBI" id="CHEBI:30413"/>
    </ligand>
    <ligandPart>
        <name>Fe</name>
        <dbReference type="ChEBI" id="CHEBI:18248"/>
    </ligandPart>
</feature>
<keyword id="KW-0330">Glyoxysome</keyword>
<keyword id="KW-0349">Heme</keyword>
<keyword id="KW-0376">Hydrogen peroxide</keyword>
<keyword id="KW-0408">Iron</keyword>
<keyword id="KW-0479">Metal-binding</keyword>
<keyword id="KW-0560">Oxidoreductase</keyword>
<keyword id="KW-0575">Peroxidase</keyword>
<keyword id="KW-0576">Peroxisome</keyword>
<gene>
    <name type="primary">CAT1</name>
</gene>
<name>CATA1_HORVU</name>
<sequence>MDPYKHRPTSGANSAYWTTNSGAPVWNNNNALTVGHRGPILLEDYHLIEKLAQFDRERIPERVVHARGASAKGFFEVTHDVSQLTCADFLRAPGVQTPVIVRFSTVVHERGSPETLRDPRGFAVKFYTREGNFDLVGNNMPVFFIRDGMKFPDMVHAFKPSPKTNMQENWRVVDFFSHHPESLHMFTFLFDDVGIPLNYRHMDGFGVNTYTLISRDGKAHLVKFHWKPTCGVKCLLDDEAVTVGGTCHTHATKDLTDSIAAGNYPEWKLFIQTIDADHEDRFDFDPLDVTKTWPEDIIPLQPVGRMVLNKNIDNFFAENEQLAFCPAVTVPGIHYSDDKLLQTRIFSYADTQRHRLGPNYLMLPVNAPKCAHHNNHHDGLMNFIHRDEEVNYFPSRFDPTRHAEKYPMPPRVLSGCREKCIIDKENNFKQAGERYRSFDPARQDRFLQRWVDALTDARVTHEIQSIWVSYWSQCDASLGQKLASRLKIKPNM</sequence>
<organism>
    <name type="scientific">Hordeum vulgare</name>
    <name type="common">Barley</name>
    <dbReference type="NCBI Taxonomy" id="4513"/>
    <lineage>
        <taxon>Eukaryota</taxon>
        <taxon>Viridiplantae</taxon>
        <taxon>Streptophyta</taxon>
        <taxon>Embryophyta</taxon>
        <taxon>Tracheophyta</taxon>
        <taxon>Spermatophyta</taxon>
        <taxon>Magnoliopsida</taxon>
        <taxon>Liliopsida</taxon>
        <taxon>Poales</taxon>
        <taxon>Poaceae</taxon>
        <taxon>BOP clade</taxon>
        <taxon>Pooideae</taxon>
        <taxon>Triticodae</taxon>
        <taxon>Triticeae</taxon>
        <taxon>Hordeinae</taxon>
        <taxon>Hordeum</taxon>
    </lineage>
</organism>
<proteinExistence type="evidence at transcript level"/>
<evidence type="ECO:0000250" key="1"/>
<evidence type="ECO:0000255" key="2">
    <source>
        <dbReference type="PROSITE-ProRule" id="PRU10013"/>
    </source>
</evidence>
<evidence type="ECO:0000305" key="3"/>
<accession>P55307</accession>
<accession>Q43761</accession>
<protein>
    <recommendedName>
        <fullName>Catalase isozyme 1</fullName>
        <ecNumber>1.11.1.6</ecNumber>
    </recommendedName>
</protein>
<comment type="function">
    <text>Occurs in almost all aerobically respiring organisms and serves to protect cells from the toxic effects of hydrogen peroxide.</text>
</comment>
<comment type="catalytic activity">
    <reaction evidence="2">
        <text>2 H2O2 = O2 + 2 H2O</text>
        <dbReference type="Rhea" id="RHEA:20309"/>
        <dbReference type="ChEBI" id="CHEBI:15377"/>
        <dbReference type="ChEBI" id="CHEBI:15379"/>
        <dbReference type="ChEBI" id="CHEBI:16240"/>
        <dbReference type="EC" id="1.11.1.6"/>
    </reaction>
</comment>
<comment type="cofactor">
    <cofactor evidence="1">
        <name>heme</name>
        <dbReference type="ChEBI" id="CHEBI:30413"/>
    </cofactor>
</comment>
<comment type="subunit">
    <text evidence="1">Homotetramer.</text>
</comment>
<comment type="subcellular location">
    <subcellularLocation>
        <location evidence="1">Peroxisome</location>
    </subcellularLocation>
    <subcellularLocation>
        <location evidence="1">Glyoxysome</location>
    </subcellularLocation>
</comment>
<comment type="tissue specificity">
    <text>In whole endosperms (aleurones plus starchy endosperm), in isolated aleurones and in developing seeds.</text>
</comment>
<comment type="similarity">
    <text evidence="3">Belongs to the catalase family.</text>
</comment>